<organism>
    <name type="scientific">Prochlorococcus marinus (strain MIT 9303)</name>
    <dbReference type="NCBI Taxonomy" id="59922"/>
    <lineage>
        <taxon>Bacteria</taxon>
        <taxon>Bacillati</taxon>
        <taxon>Cyanobacteriota</taxon>
        <taxon>Cyanophyceae</taxon>
        <taxon>Synechococcales</taxon>
        <taxon>Prochlorococcaceae</taxon>
        <taxon>Prochlorococcus</taxon>
    </lineage>
</organism>
<protein>
    <recommendedName>
        <fullName evidence="1">Crossover junction endodeoxyribonuclease RuvC</fullName>
        <ecNumber evidence="1">3.1.21.10</ecNumber>
    </recommendedName>
    <alternativeName>
        <fullName evidence="1">Holliday junction nuclease RuvC</fullName>
    </alternativeName>
    <alternativeName>
        <fullName evidence="1">Holliday junction resolvase RuvC</fullName>
    </alternativeName>
</protein>
<keyword id="KW-0963">Cytoplasm</keyword>
<keyword id="KW-0227">DNA damage</keyword>
<keyword id="KW-0233">DNA recombination</keyword>
<keyword id="KW-0234">DNA repair</keyword>
<keyword id="KW-0238">DNA-binding</keyword>
<keyword id="KW-0255">Endonuclease</keyword>
<keyword id="KW-0378">Hydrolase</keyword>
<keyword id="KW-0460">Magnesium</keyword>
<keyword id="KW-0479">Metal-binding</keyword>
<keyword id="KW-0540">Nuclease</keyword>
<evidence type="ECO:0000255" key="1">
    <source>
        <dbReference type="HAMAP-Rule" id="MF_00034"/>
    </source>
</evidence>
<name>RUVC_PROM3</name>
<feature type="chain" id="PRO_1000002794" description="Crossover junction endodeoxyribonuclease RuvC">
    <location>
        <begin position="1"/>
        <end position="154"/>
    </location>
</feature>
<feature type="active site" evidence="1">
    <location>
        <position position="7"/>
    </location>
</feature>
<feature type="active site" evidence="1">
    <location>
        <position position="67"/>
    </location>
</feature>
<feature type="active site" evidence="1">
    <location>
        <position position="139"/>
    </location>
</feature>
<feature type="binding site" evidence="1">
    <location>
        <position position="7"/>
    </location>
    <ligand>
        <name>Mg(2+)</name>
        <dbReference type="ChEBI" id="CHEBI:18420"/>
        <label>1</label>
    </ligand>
</feature>
<feature type="binding site" evidence="1">
    <location>
        <position position="67"/>
    </location>
    <ligand>
        <name>Mg(2+)</name>
        <dbReference type="ChEBI" id="CHEBI:18420"/>
        <label>2</label>
    </ligand>
</feature>
<feature type="binding site" evidence="1">
    <location>
        <position position="139"/>
    </location>
    <ligand>
        <name>Mg(2+)</name>
        <dbReference type="ChEBI" id="CHEBI:18420"/>
        <label>1</label>
    </ligand>
</feature>
<gene>
    <name evidence="1" type="primary">ruvC</name>
    <name type="ordered locus">P9303_08941</name>
</gene>
<dbReference type="EC" id="3.1.21.10" evidence="1"/>
<dbReference type="EMBL" id="CP000554">
    <property type="protein sequence ID" value="ABM77645.1"/>
    <property type="molecule type" value="Genomic_DNA"/>
</dbReference>
<dbReference type="RefSeq" id="WP_011825552.1">
    <property type="nucleotide sequence ID" value="NC_008820.1"/>
</dbReference>
<dbReference type="SMR" id="A2C835"/>
<dbReference type="STRING" id="59922.P9303_08941"/>
<dbReference type="KEGG" id="pmf:P9303_08941"/>
<dbReference type="HOGENOM" id="CLU_091257_3_1_3"/>
<dbReference type="BioCyc" id="PMAR59922:G1G80-807-MONOMER"/>
<dbReference type="Proteomes" id="UP000002274">
    <property type="component" value="Chromosome"/>
</dbReference>
<dbReference type="GO" id="GO:0005737">
    <property type="term" value="C:cytoplasm"/>
    <property type="evidence" value="ECO:0007669"/>
    <property type="project" value="UniProtKB-SubCell"/>
</dbReference>
<dbReference type="GO" id="GO:0048476">
    <property type="term" value="C:Holliday junction resolvase complex"/>
    <property type="evidence" value="ECO:0007669"/>
    <property type="project" value="UniProtKB-UniRule"/>
</dbReference>
<dbReference type="GO" id="GO:0008821">
    <property type="term" value="F:crossover junction DNA endonuclease activity"/>
    <property type="evidence" value="ECO:0007669"/>
    <property type="project" value="UniProtKB-UniRule"/>
</dbReference>
<dbReference type="GO" id="GO:0003677">
    <property type="term" value="F:DNA binding"/>
    <property type="evidence" value="ECO:0007669"/>
    <property type="project" value="UniProtKB-KW"/>
</dbReference>
<dbReference type="GO" id="GO:0000287">
    <property type="term" value="F:magnesium ion binding"/>
    <property type="evidence" value="ECO:0007669"/>
    <property type="project" value="UniProtKB-UniRule"/>
</dbReference>
<dbReference type="GO" id="GO:0006310">
    <property type="term" value="P:DNA recombination"/>
    <property type="evidence" value="ECO:0007669"/>
    <property type="project" value="UniProtKB-UniRule"/>
</dbReference>
<dbReference type="GO" id="GO:0006281">
    <property type="term" value="P:DNA repair"/>
    <property type="evidence" value="ECO:0007669"/>
    <property type="project" value="UniProtKB-UniRule"/>
</dbReference>
<dbReference type="CDD" id="cd16962">
    <property type="entry name" value="RuvC"/>
    <property type="match status" value="1"/>
</dbReference>
<dbReference type="FunFam" id="3.30.420.10:FF:000002">
    <property type="entry name" value="Crossover junction endodeoxyribonuclease RuvC"/>
    <property type="match status" value="1"/>
</dbReference>
<dbReference type="Gene3D" id="3.30.420.10">
    <property type="entry name" value="Ribonuclease H-like superfamily/Ribonuclease H"/>
    <property type="match status" value="1"/>
</dbReference>
<dbReference type="HAMAP" id="MF_00034">
    <property type="entry name" value="RuvC"/>
    <property type="match status" value="1"/>
</dbReference>
<dbReference type="InterPro" id="IPR012337">
    <property type="entry name" value="RNaseH-like_sf"/>
</dbReference>
<dbReference type="InterPro" id="IPR036397">
    <property type="entry name" value="RNaseH_sf"/>
</dbReference>
<dbReference type="InterPro" id="IPR020563">
    <property type="entry name" value="X-over_junc_endoDNase_Mg_BS"/>
</dbReference>
<dbReference type="InterPro" id="IPR002176">
    <property type="entry name" value="X-over_junc_endoDNase_RuvC"/>
</dbReference>
<dbReference type="NCBIfam" id="NF000711">
    <property type="entry name" value="PRK00039.2-1"/>
    <property type="match status" value="1"/>
</dbReference>
<dbReference type="PANTHER" id="PTHR30194">
    <property type="entry name" value="CROSSOVER JUNCTION ENDODEOXYRIBONUCLEASE RUVC"/>
    <property type="match status" value="1"/>
</dbReference>
<dbReference type="PANTHER" id="PTHR30194:SF3">
    <property type="entry name" value="CROSSOVER JUNCTION ENDODEOXYRIBONUCLEASE RUVC"/>
    <property type="match status" value="1"/>
</dbReference>
<dbReference type="Pfam" id="PF02075">
    <property type="entry name" value="RuvC"/>
    <property type="match status" value="1"/>
</dbReference>
<dbReference type="PRINTS" id="PR00696">
    <property type="entry name" value="RSOLVASERUVC"/>
</dbReference>
<dbReference type="SUPFAM" id="SSF53098">
    <property type="entry name" value="Ribonuclease H-like"/>
    <property type="match status" value="1"/>
</dbReference>
<dbReference type="PROSITE" id="PS01321">
    <property type="entry name" value="RUVC"/>
    <property type="match status" value="1"/>
</dbReference>
<reference key="1">
    <citation type="journal article" date="2007" name="PLoS Genet.">
        <title>Patterns and implications of gene gain and loss in the evolution of Prochlorococcus.</title>
        <authorList>
            <person name="Kettler G.C."/>
            <person name="Martiny A.C."/>
            <person name="Huang K."/>
            <person name="Zucker J."/>
            <person name="Coleman M.L."/>
            <person name="Rodrigue S."/>
            <person name="Chen F."/>
            <person name="Lapidus A."/>
            <person name="Ferriera S."/>
            <person name="Johnson J."/>
            <person name="Steglich C."/>
            <person name="Church G.M."/>
            <person name="Richardson P."/>
            <person name="Chisholm S.W."/>
        </authorList>
    </citation>
    <scope>NUCLEOTIDE SEQUENCE [LARGE SCALE GENOMIC DNA]</scope>
    <source>
        <strain>MIT 9303</strain>
    </source>
</reference>
<sequence>MRILGIDPGLARVGYGVIDTSNGQQQMLDCGIIRTNPGIDDGVRMVEIASDLRQLIRRWKPQLAAVEKFFFYRSSTTISVVQARGVIIMTLARFRVPMVEFPPMQIKLALAGSGHAEKDEVLDAVMRELNLDQPPRPDDAADALAIALTGWFQR</sequence>
<accession>A2C835</accession>
<comment type="function">
    <text evidence="1">The RuvA-RuvB-RuvC complex processes Holliday junction (HJ) DNA during genetic recombination and DNA repair. Endonuclease that resolves HJ intermediates. Cleaves cruciform DNA by making single-stranded nicks across the HJ at symmetrical positions within the homologous arms, yielding a 5'-phosphate and a 3'-hydroxyl group; requires a central core of homology in the junction. The consensus cleavage sequence is 5'-(A/T)TT(C/G)-3'. Cleavage occurs on the 3'-side of the TT dinucleotide at the point of strand exchange. HJ branch migration catalyzed by RuvA-RuvB allows RuvC to scan DNA until it finds its consensus sequence, where it cleaves and resolves the cruciform DNA.</text>
</comment>
<comment type="catalytic activity">
    <reaction evidence="1">
        <text>Endonucleolytic cleavage at a junction such as a reciprocal single-stranded crossover between two homologous DNA duplexes (Holliday junction).</text>
        <dbReference type="EC" id="3.1.21.10"/>
    </reaction>
</comment>
<comment type="cofactor">
    <cofactor evidence="1">
        <name>Mg(2+)</name>
        <dbReference type="ChEBI" id="CHEBI:18420"/>
    </cofactor>
    <text evidence="1">Binds 2 Mg(2+) ion per subunit.</text>
</comment>
<comment type="subunit">
    <text evidence="1">Homodimer which binds Holliday junction (HJ) DNA. The HJ becomes 2-fold symmetrical on binding to RuvC with unstacked arms; it has a different conformation from HJ DNA in complex with RuvA. In the full resolvosome a probable DNA-RuvA(4)-RuvB(12)-RuvC(2) complex forms which resolves the HJ.</text>
</comment>
<comment type="subcellular location">
    <subcellularLocation>
        <location evidence="1">Cytoplasm</location>
    </subcellularLocation>
</comment>
<comment type="similarity">
    <text evidence="1">Belongs to the RuvC family.</text>
</comment>
<proteinExistence type="inferred from homology"/>